<accession>Q5RCZ5</accession>
<evidence type="ECO:0000250" key="1"/>
<evidence type="ECO:0000250" key="2">
    <source>
        <dbReference type="UniProtKB" id="P13056"/>
    </source>
</evidence>
<evidence type="ECO:0000250" key="3">
    <source>
        <dbReference type="UniProtKB" id="Q505F1"/>
    </source>
</evidence>
<evidence type="ECO:0000255" key="4">
    <source>
        <dbReference type="PROSITE-ProRule" id="PRU00407"/>
    </source>
</evidence>
<evidence type="ECO:0000255" key="5">
    <source>
        <dbReference type="PROSITE-ProRule" id="PRU01189"/>
    </source>
</evidence>
<evidence type="ECO:0000305" key="6"/>
<name>NR2C1_PONAB</name>
<dbReference type="EMBL" id="CR858123">
    <property type="protein sequence ID" value="CAH90362.1"/>
    <property type="molecule type" value="mRNA"/>
</dbReference>
<dbReference type="RefSeq" id="NP_001127276.1">
    <property type="nucleotide sequence ID" value="NM_001133804.2"/>
</dbReference>
<dbReference type="STRING" id="9601.ENSPPYP00000005520"/>
<dbReference type="GeneID" id="100174333"/>
<dbReference type="KEGG" id="pon:100174333"/>
<dbReference type="CTD" id="7181"/>
<dbReference type="eggNOG" id="KOG3575">
    <property type="taxonomic scope" value="Eukaryota"/>
</dbReference>
<dbReference type="InParanoid" id="Q5RCZ5"/>
<dbReference type="OrthoDB" id="10024684at2759"/>
<dbReference type="Proteomes" id="UP000001595">
    <property type="component" value="Unplaced"/>
</dbReference>
<dbReference type="GO" id="GO:0016605">
    <property type="term" value="C:PML body"/>
    <property type="evidence" value="ECO:0007669"/>
    <property type="project" value="UniProtKB-SubCell"/>
</dbReference>
<dbReference type="GO" id="GO:0003700">
    <property type="term" value="F:DNA-binding transcription factor activity"/>
    <property type="evidence" value="ECO:0007669"/>
    <property type="project" value="InterPro"/>
</dbReference>
<dbReference type="GO" id="GO:0043565">
    <property type="term" value="F:sequence-specific DNA binding"/>
    <property type="evidence" value="ECO:0007669"/>
    <property type="project" value="InterPro"/>
</dbReference>
<dbReference type="GO" id="GO:0008270">
    <property type="term" value="F:zinc ion binding"/>
    <property type="evidence" value="ECO:0007669"/>
    <property type="project" value="UniProtKB-KW"/>
</dbReference>
<dbReference type="CDD" id="cd06967">
    <property type="entry name" value="NR_DBD_TR2_like"/>
    <property type="match status" value="1"/>
</dbReference>
<dbReference type="CDD" id="cd06952">
    <property type="entry name" value="NR_LBD_TR2_like"/>
    <property type="match status" value="1"/>
</dbReference>
<dbReference type="FunFam" id="1.10.565.10:FF:000012">
    <property type="entry name" value="Nuclear receptor subfamily 2 group C member 1"/>
    <property type="match status" value="1"/>
</dbReference>
<dbReference type="FunFam" id="3.30.50.10:FF:000015">
    <property type="entry name" value="Nuclear receptor subfamily 2, group C, member 1"/>
    <property type="match status" value="1"/>
</dbReference>
<dbReference type="Gene3D" id="3.30.50.10">
    <property type="entry name" value="Erythroid Transcription Factor GATA-1, subunit A"/>
    <property type="match status" value="1"/>
</dbReference>
<dbReference type="Gene3D" id="1.10.565.10">
    <property type="entry name" value="Retinoid X Receptor"/>
    <property type="match status" value="1"/>
</dbReference>
<dbReference type="InterPro" id="IPR035500">
    <property type="entry name" value="NHR-like_dom_sf"/>
</dbReference>
<dbReference type="InterPro" id="IPR048245">
    <property type="entry name" value="NR2C1/2-like_DBD"/>
</dbReference>
<dbReference type="InterPro" id="IPR048246">
    <property type="entry name" value="NR2C1/2-like_LBD"/>
</dbReference>
<dbReference type="InterPro" id="IPR000536">
    <property type="entry name" value="Nucl_hrmn_rcpt_lig-bd"/>
</dbReference>
<dbReference type="InterPro" id="IPR050274">
    <property type="entry name" value="Nuclear_hormone_rcpt_NR2"/>
</dbReference>
<dbReference type="InterPro" id="IPR001723">
    <property type="entry name" value="Nuclear_hrmn_rcpt"/>
</dbReference>
<dbReference type="InterPro" id="IPR001628">
    <property type="entry name" value="Znf_hrmn_rcpt"/>
</dbReference>
<dbReference type="InterPro" id="IPR013088">
    <property type="entry name" value="Znf_NHR/GATA"/>
</dbReference>
<dbReference type="PANTHER" id="PTHR24083">
    <property type="entry name" value="NUCLEAR HORMONE RECEPTOR"/>
    <property type="match status" value="1"/>
</dbReference>
<dbReference type="Pfam" id="PF00104">
    <property type="entry name" value="Hormone_recep"/>
    <property type="match status" value="1"/>
</dbReference>
<dbReference type="Pfam" id="PF00105">
    <property type="entry name" value="zf-C4"/>
    <property type="match status" value="1"/>
</dbReference>
<dbReference type="PRINTS" id="PR00398">
    <property type="entry name" value="STRDHORMONER"/>
</dbReference>
<dbReference type="PRINTS" id="PR00047">
    <property type="entry name" value="STROIDFINGER"/>
</dbReference>
<dbReference type="SMART" id="SM00430">
    <property type="entry name" value="HOLI"/>
    <property type="match status" value="1"/>
</dbReference>
<dbReference type="SMART" id="SM00399">
    <property type="entry name" value="ZnF_C4"/>
    <property type="match status" value="1"/>
</dbReference>
<dbReference type="SUPFAM" id="SSF57716">
    <property type="entry name" value="Glucocorticoid receptor-like (DNA-binding domain)"/>
    <property type="match status" value="1"/>
</dbReference>
<dbReference type="SUPFAM" id="SSF48508">
    <property type="entry name" value="Nuclear receptor ligand-binding domain"/>
    <property type="match status" value="1"/>
</dbReference>
<dbReference type="PROSITE" id="PS51843">
    <property type="entry name" value="NR_LBD"/>
    <property type="match status" value="1"/>
</dbReference>
<dbReference type="PROSITE" id="PS00031">
    <property type="entry name" value="NUCLEAR_REC_DBD_1"/>
    <property type="match status" value="1"/>
</dbReference>
<dbReference type="PROSITE" id="PS51030">
    <property type="entry name" value="NUCLEAR_REC_DBD_2"/>
    <property type="match status" value="1"/>
</dbReference>
<reference key="1">
    <citation type="submission" date="2004-11" db="EMBL/GenBank/DDBJ databases">
        <authorList>
            <consortium name="The German cDNA consortium"/>
        </authorList>
    </citation>
    <scope>NUCLEOTIDE SEQUENCE [LARGE SCALE MRNA]</scope>
    <source>
        <tissue>Heart</tissue>
    </source>
</reference>
<proteinExistence type="evidence at transcript level"/>
<keyword id="KW-0010">Activator</keyword>
<keyword id="KW-0238">DNA-binding</keyword>
<keyword id="KW-1017">Isopeptide bond</keyword>
<keyword id="KW-0479">Metal-binding</keyword>
<keyword id="KW-0539">Nucleus</keyword>
<keyword id="KW-0597">Phosphoprotein</keyword>
<keyword id="KW-0675">Receptor</keyword>
<keyword id="KW-1185">Reference proteome</keyword>
<keyword id="KW-0678">Repressor</keyword>
<keyword id="KW-0804">Transcription</keyword>
<keyword id="KW-0805">Transcription regulation</keyword>
<keyword id="KW-0832">Ubl conjugation</keyword>
<keyword id="KW-0862">Zinc</keyword>
<keyword id="KW-0863">Zinc-finger</keyword>
<sequence>MATIEEIAHQIIEQQMGEIVTEQQTGQKIQIVTALDHNTQGKQFILTNHDGSTPSKVILARQDSTPGKVFLTTPDAAGVNQLFFTTPDLSAQHLQLLTDNSSPDQGPNKVFDLCVVCGDKASGRHYGAVTCEGCKGFFKRSIRKNLVYSCRGSKDCIINKHHRNRCQYCRLQRCIAFGMKQDSVQCERKPIEVSREKSSNCAASTEKIYIRKDLRSPLTATPTFVTDSESTRSTGLLDSGMFVNIHPSGVKTESTVLMTSDKAESCQGDLSTLASVVTSLANLGKTKDLSQNSNEMSMIESLSNDDTSLCEFQEMHTNGDVSRAFDTLAKALNPGESTACQSSVAGMEGSVHLITGDSSINYTEKEGPLLSDSHVAFRLTMPSPMPEYLNVHYIGESASRLLFLSMHWALSIPSFQALGQENSISLVKAYWNELFTLGLAQCWQVMNVATILATFVNCLHNSLQQDKMSTERRKLLMEHIFKLQEFCNSMVKLCIDGYEYAYLKAIVLFSPDHPGLENMEQIEKFQEKAYVEFQDYITKTYPDDTYRLSRLLLRLPALRLMNATITEELFFKGLIGNIRIDSVIPHILKMEPGQYSKTSSL</sequence>
<comment type="function">
    <text evidence="1">Orphan nuclear receptor. Binds the IR7 element in the promoter of its own gene in an autoregulatory negative feedback mechanism. Primarily repressor of a broad range of genes including ESR1 and RARB. Together with NR2C2, forms the core of the DRED (direct repeat erythroid-definitive) complex that represses embryonic and fetal globin transcription. Binds to hormone response elements (HREs) consisting of two 5'-AGGTCA-3' half site direct repeat consensus sequences. Also activator of OCT4 gene expression. Plays a fundamental role in early embryogenesis and regulates embryonic stem cell proliferation and differentiation. Mediator of retinoic acid-regulated preadipocyte proliferation (By similarity).</text>
</comment>
<comment type="subunit">
    <text evidence="1">Homodimer (By similarity). Heterodimer; with NR2C2 which is required for chromatin remodeling and for binding to promoter regions such as globin DR1 repeats (By similarity). Interacts with ESR1; the interaction prevents homodimerization of ESR1 and suppresses its transcriptional activity and cell growth. Interacts with NRIP1 (via its LXXLL motifs); the interaction provides corepressor activity. Interacts with HDAC3 (via the DNA-binding domain); the interaction recruits phosphorylated NR2C1 to PML bodies for sumoylation. Interacts with HDAC4 (via the DNA-binding domain). Interacts with PIAS1; the interaction is required for sumoylation of NR2C1. Interacts with UBE2I; the interaction is required for sumoylation of NR2C1. Interacts with KAT2B; the interaction acts as a corepressor of gene expression (By similarity).</text>
</comment>
<comment type="subcellular location">
    <subcellularLocation>
        <location evidence="4">Nucleus</location>
    </subcellularLocation>
    <subcellularLocation>
        <location evidence="1">Nucleus</location>
        <location evidence="1">PML body</location>
    </subcellularLocation>
    <text evidence="1">Recruited by HDAC3, after all-trans retinoic acid stimulated MAPK1-mediated Thr-223 phosphorylation, to PML bodies for subsequent sumoylation.</text>
</comment>
<comment type="PTM">
    <text evidence="1">Sumoylation requires both PIAS1 and UBE2I. Sumoylation appears to dissociate NR2C1 from the PML nuclear bodies. Enhances the interaction with NRIP1 but inhibits interaction with KAT2B. In proliferating cells, stimulation by all-trans retinoic acid, activation of MAPK1-mediated phosphorylation and recruitment to PML bodies with subsequent sumoylation, suppresses OCT4 expression (By similarity).</text>
</comment>
<comment type="PTM">
    <text evidence="1">Phosphorylated on several serine and threonine residues. Phosphorylation on Thr-223, stimulated by all-trans retinoic acid (atRA) mediates PML location and sumoylation in proliferating cells which then modulates its association with effector molecules, KAT2B and NRIP1. Phosphorylation on Ser-582 by PKC is important for protein stability and function as activator of RARB (By similarity).</text>
</comment>
<comment type="similarity">
    <text evidence="6">Belongs to the nuclear hormone receptor family. NR2 subfamily.</text>
</comment>
<feature type="chain" id="PRO_0000369404" description="Nuclear receptor subfamily 2 group C member 1">
    <location>
        <begin position="1"/>
        <end position="601"/>
    </location>
</feature>
<feature type="domain" description="NR LBD" evidence="5">
    <location>
        <begin position="349"/>
        <end position="591"/>
    </location>
</feature>
<feature type="DNA-binding region" description="Nuclear receptor" evidence="4">
    <location>
        <begin position="111"/>
        <end position="186"/>
    </location>
</feature>
<feature type="zinc finger region" description="NR C4-type" evidence="4">
    <location>
        <begin position="114"/>
        <end position="134"/>
    </location>
</feature>
<feature type="zinc finger region" description="NR C4-type" evidence="4">
    <location>
        <begin position="150"/>
        <end position="169"/>
    </location>
</feature>
<feature type="region of interest" description="Required for interaction with KAT2B" evidence="1">
    <location>
        <begin position="1"/>
        <end position="179"/>
    </location>
</feature>
<feature type="region of interest" description="Required for interaction with NRIP1" evidence="1">
    <location>
        <begin position="585"/>
        <end position="601"/>
    </location>
</feature>
<feature type="modified residue" description="Phosphoserine" evidence="3">
    <location>
        <position position="198"/>
    </location>
</feature>
<feature type="modified residue" description="Phosphoserine" evidence="2">
    <location>
        <position position="216"/>
    </location>
</feature>
<feature type="modified residue" description="Phosphothreonine" evidence="2">
    <location>
        <position position="221"/>
    </location>
</feature>
<feature type="modified residue" description="Phosphothreonine; by MAPK1" evidence="3">
    <location>
        <position position="223"/>
    </location>
</feature>
<feature type="modified residue" description="Phosphoserine; by PKC" evidence="3">
    <location>
        <position position="582"/>
    </location>
</feature>
<feature type="cross-link" description="Glycyl lysine isopeptide (Lys-Gly) (interchain with G-Cter in SUMO); alternate" evidence="1">
    <location>
        <position position="251"/>
    </location>
</feature>
<feature type="cross-link" description="Glycyl lysine isopeptide (Lys-Gly) (interchain with G-Cter in SUMO2); alternate" evidence="2">
    <location>
        <position position="251"/>
    </location>
</feature>
<feature type="cross-link" description="Glycyl lysine isopeptide (Lys-Gly) (interchain with G-Cter in SUMO2)" evidence="2">
    <location>
        <position position="589"/>
    </location>
</feature>
<organism>
    <name type="scientific">Pongo abelii</name>
    <name type="common">Sumatran orangutan</name>
    <name type="synonym">Pongo pygmaeus abelii</name>
    <dbReference type="NCBI Taxonomy" id="9601"/>
    <lineage>
        <taxon>Eukaryota</taxon>
        <taxon>Metazoa</taxon>
        <taxon>Chordata</taxon>
        <taxon>Craniata</taxon>
        <taxon>Vertebrata</taxon>
        <taxon>Euteleostomi</taxon>
        <taxon>Mammalia</taxon>
        <taxon>Eutheria</taxon>
        <taxon>Euarchontoglires</taxon>
        <taxon>Primates</taxon>
        <taxon>Haplorrhini</taxon>
        <taxon>Catarrhini</taxon>
        <taxon>Hominidae</taxon>
        <taxon>Pongo</taxon>
    </lineage>
</organism>
<protein>
    <recommendedName>
        <fullName>Nuclear receptor subfamily 2 group C member 1</fullName>
    </recommendedName>
</protein>
<gene>
    <name type="primary">NR2C1</name>
</gene>